<sequence length="180" mass="19672">MSRIGRKPIQIPDNVNVTVENRQIIVKGPKGQLSYSLPEGIGITIDNKTMLITRESDLSKQRALHGLARSLISNMVTGVSQGFTKALQIYGVGYRAQVSGNKIILNIGYSHPVEFVLPEGIKATVDEKQTTITLHGIDKQLVGQIAANLRAIRPPDAYKGKGIRYTDEVLKLKPGKTGKK</sequence>
<proteinExistence type="inferred from homology"/>
<accession>B5YG32</accession>
<name>RL6_THEYD</name>
<comment type="function">
    <text evidence="1">This protein binds to the 23S rRNA, and is important in its secondary structure. It is located near the subunit interface in the base of the L7/L12 stalk, and near the tRNA binding site of the peptidyltransferase center.</text>
</comment>
<comment type="subunit">
    <text evidence="1">Part of the 50S ribosomal subunit.</text>
</comment>
<comment type="similarity">
    <text evidence="1">Belongs to the universal ribosomal protein uL6 family.</text>
</comment>
<protein>
    <recommendedName>
        <fullName evidence="1">Large ribosomal subunit protein uL6</fullName>
    </recommendedName>
    <alternativeName>
        <fullName evidence="2">50S ribosomal protein L6</fullName>
    </alternativeName>
</protein>
<feature type="chain" id="PRO_1000144065" description="Large ribosomal subunit protein uL6">
    <location>
        <begin position="1"/>
        <end position="180"/>
    </location>
</feature>
<gene>
    <name evidence="1" type="primary">rplF</name>
    <name type="ordered locus">THEYE_A1431</name>
</gene>
<dbReference type="EMBL" id="CP001147">
    <property type="protein sequence ID" value="ACI21364.1"/>
    <property type="molecule type" value="Genomic_DNA"/>
</dbReference>
<dbReference type="RefSeq" id="WP_012546082.1">
    <property type="nucleotide sequence ID" value="NC_011296.1"/>
</dbReference>
<dbReference type="RefSeq" id="YP_002249230.1">
    <property type="nucleotide sequence ID" value="NC_011296.1"/>
</dbReference>
<dbReference type="SMR" id="B5YG32"/>
<dbReference type="FunCoup" id="B5YG32">
    <property type="interactions" value="517"/>
</dbReference>
<dbReference type="STRING" id="289376.THEYE_A1431"/>
<dbReference type="EnsemblBacteria" id="ACI21364">
    <property type="protein sequence ID" value="ACI21364"/>
    <property type="gene ID" value="THEYE_A1431"/>
</dbReference>
<dbReference type="KEGG" id="tye:THEYE_A1431"/>
<dbReference type="PATRIC" id="fig|289376.4.peg.1392"/>
<dbReference type="eggNOG" id="COG0097">
    <property type="taxonomic scope" value="Bacteria"/>
</dbReference>
<dbReference type="HOGENOM" id="CLU_065464_1_2_0"/>
<dbReference type="InParanoid" id="B5YG32"/>
<dbReference type="OrthoDB" id="9805007at2"/>
<dbReference type="Proteomes" id="UP000000718">
    <property type="component" value="Chromosome"/>
</dbReference>
<dbReference type="GO" id="GO:0022625">
    <property type="term" value="C:cytosolic large ribosomal subunit"/>
    <property type="evidence" value="ECO:0000318"/>
    <property type="project" value="GO_Central"/>
</dbReference>
<dbReference type="GO" id="GO:0019843">
    <property type="term" value="F:rRNA binding"/>
    <property type="evidence" value="ECO:0007669"/>
    <property type="project" value="UniProtKB-UniRule"/>
</dbReference>
<dbReference type="GO" id="GO:0003735">
    <property type="term" value="F:structural constituent of ribosome"/>
    <property type="evidence" value="ECO:0000318"/>
    <property type="project" value="GO_Central"/>
</dbReference>
<dbReference type="GO" id="GO:0002181">
    <property type="term" value="P:cytoplasmic translation"/>
    <property type="evidence" value="ECO:0000318"/>
    <property type="project" value="GO_Central"/>
</dbReference>
<dbReference type="FunFam" id="3.90.930.12:FF:000001">
    <property type="entry name" value="50S ribosomal protein L6"/>
    <property type="match status" value="1"/>
</dbReference>
<dbReference type="FunFam" id="3.90.930.12:FF:000002">
    <property type="entry name" value="50S ribosomal protein L6"/>
    <property type="match status" value="1"/>
</dbReference>
<dbReference type="Gene3D" id="3.90.930.12">
    <property type="entry name" value="Ribosomal protein L6, alpha-beta domain"/>
    <property type="match status" value="2"/>
</dbReference>
<dbReference type="HAMAP" id="MF_01365_B">
    <property type="entry name" value="Ribosomal_uL6_B"/>
    <property type="match status" value="1"/>
</dbReference>
<dbReference type="InterPro" id="IPR000702">
    <property type="entry name" value="Ribosomal_uL6-like"/>
</dbReference>
<dbReference type="InterPro" id="IPR036789">
    <property type="entry name" value="Ribosomal_uL6-like_a/b-dom_sf"/>
</dbReference>
<dbReference type="InterPro" id="IPR020040">
    <property type="entry name" value="Ribosomal_uL6_a/b-dom"/>
</dbReference>
<dbReference type="InterPro" id="IPR019906">
    <property type="entry name" value="Ribosomal_uL6_bac-type"/>
</dbReference>
<dbReference type="InterPro" id="IPR002358">
    <property type="entry name" value="Ribosomal_uL6_CS"/>
</dbReference>
<dbReference type="NCBIfam" id="TIGR03654">
    <property type="entry name" value="L6_bact"/>
    <property type="match status" value="1"/>
</dbReference>
<dbReference type="PANTHER" id="PTHR11655">
    <property type="entry name" value="60S/50S RIBOSOMAL PROTEIN L6/L9"/>
    <property type="match status" value="1"/>
</dbReference>
<dbReference type="PANTHER" id="PTHR11655:SF14">
    <property type="entry name" value="LARGE RIBOSOMAL SUBUNIT PROTEIN UL6M"/>
    <property type="match status" value="1"/>
</dbReference>
<dbReference type="Pfam" id="PF00347">
    <property type="entry name" value="Ribosomal_L6"/>
    <property type="match status" value="2"/>
</dbReference>
<dbReference type="PIRSF" id="PIRSF002162">
    <property type="entry name" value="Ribosomal_L6"/>
    <property type="match status" value="1"/>
</dbReference>
<dbReference type="PRINTS" id="PR00059">
    <property type="entry name" value="RIBOSOMALL6"/>
</dbReference>
<dbReference type="SUPFAM" id="SSF56053">
    <property type="entry name" value="Ribosomal protein L6"/>
    <property type="match status" value="2"/>
</dbReference>
<dbReference type="PROSITE" id="PS00525">
    <property type="entry name" value="RIBOSOMAL_L6_1"/>
    <property type="match status" value="1"/>
</dbReference>
<evidence type="ECO:0000255" key="1">
    <source>
        <dbReference type="HAMAP-Rule" id="MF_01365"/>
    </source>
</evidence>
<evidence type="ECO:0000305" key="2"/>
<keyword id="KW-1185">Reference proteome</keyword>
<keyword id="KW-0687">Ribonucleoprotein</keyword>
<keyword id="KW-0689">Ribosomal protein</keyword>
<keyword id="KW-0694">RNA-binding</keyword>
<keyword id="KW-0699">rRNA-binding</keyword>
<organism>
    <name type="scientific">Thermodesulfovibrio yellowstonii (strain ATCC 51303 / DSM 11347 / YP87)</name>
    <dbReference type="NCBI Taxonomy" id="289376"/>
    <lineage>
        <taxon>Bacteria</taxon>
        <taxon>Pseudomonadati</taxon>
        <taxon>Nitrospirota</taxon>
        <taxon>Thermodesulfovibrionia</taxon>
        <taxon>Thermodesulfovibrionales</taxon>
        <taxon>Thermodesulfovibrionaceae</taxon>
        <taxon>Thermodesulfovibrio</taxon>
    </lineage>
</organism>
<reference key="1">
    <citation type="submission" date="2008-08" db="EMBL/GenBank/DDBJ databases">
        <title>The complete genome sequence of Thermodesulfovibrio yellowstonii strain ATCC 51303 / DSM 11347 / YP87.</title>
        <authorList>
            <person name="Dodson R.J."/>
            <person name="Durkin A.S."/>
            <person name="Wu M."/>
            <person name="Eisen J."/>
            <person name="Sutton G."/>
        </authorList>
    </citation>
    <scope>NUCLEOTIDE SEQUENCE [LARGE SCALE GENOMIC DNA]</scope>
    <source>
        <strain>ATCC 51303 / DSM 11347 / YP87</strain>
    </source>
</reference>